<feature type="signal peptide" evidence="2">
    <location>
        <begin position="1"/>
        <end position="24"/>
    </location>
</feature>
<feature type="chain" id="PRO_0000435465" description="Leukocyte immunoglobulin-like receptor subfamily B member 3A" evidence="2">
    <location>
        <begin position="25"/>
        <end position="744"/>
    </location>
</feature>
<feature type="topological domain" description="Extracellular" evidence="2">
    <location>
        <begin position="25"/>
        <end position="543"/>
    </location>
</feature>
<feature type="transmembrane region" description="Helical" evidence="2">
    <location>
        <begin position="544"/>
        <end position="564"/>
    </location>
</feature>
<feature type="topological domain" description="Cytoplasmic" evidence="2">
    <location>
        <begin position="565"/>
        <end position="744"/>
    </location>
</feature>
<feature type="domain" description="Ig-like C2-type 1" evidence="2">
    <location>
        <begin position="26"/>
        <end position="119"/>
    </location>
</feature>
<feature type="domain" description="Ig-like C2-type 2" evidence="2">
    <location>
        <begin position="121"/>
        <end position="221"/>
    </location>
</feature>
<feature type="domain" description="Ig-like C2-type 3" evidence="2">
    <location>
        <begin position="223"/>
        <end position="316"/>
    </location>
</feature>
<feature type="domain" description="Ig-like C2-type 4" evidence="2">
    <location>
        <begin position="320"/>
        <end position="419"/>
    </location>
</feature>
<feature type="domain" description="Ig-like C2-type 5" evidence="2">
    <location>
        <begin position="426"/>
        <end position="520"/>
    </location>
</feature>
<feature type="region of interest" description="Disordered" evidence="3">
    <location>
        <begin position="572"/>
        <end position="617"/>
    </location>
</feature>
<feature type="region of interest" description="Disordered" evidence="3">
    <location>
        <begin position="630"/>
        <end position="652"/>
    </location>
</feature>
<feature type="region of interest" description="Disordered" evidence="3">
    <location>
        <begin position="667"/>
        <end position="744"/>
    </location>
</feature>
<feature type="short sequence motif" description="ITIM motif 1" evidence="5">
    <location>
        <begin position="615"/>
        <end position="620"/>
    </location>
</feature>
<feature type="short sequence motif" description="ITIM motif 2" evidence="5">
    <location>
        <begin position="695"/>
        <end position="700"/>
    </location>
</feature>
<feature type="short sequence motif" description="ITIM motif 3" evidence="5">
    <location>
        <begin position="725"/>
        <end position="730"/>
    </location>
</feature>
<feature type="compositionally biased region" description="Basic and acidic residues" evidence="3">
    <location>
        <begin position="572"/>
        <end position="584"/>
    </location>
</feature>
<feature type="modified residue" description="Phosphotyrosine; by LYN" evidence="1">
    <location>
        <position position="697"/>
    </location>
</feature>
<feature type="modified residue" description="Phosphotyrosine; by LYN" evidence="1">
    <location>
        <position position="727"/>
    </location>
</feature>
<feature type="glycosylation site" description="N-linked (GlcNAc...) asparagine" evidence="2">
    <location>
        <position position="79"/>
    </location>
</feature>
<feature type="glycosylation site" description="N-linked (GlcNAc...) asparagine" evidence="2">
    <location>
        <position position="338"/>
    </location>
</feature>
<feature type="glycosylation site" description="N-linked (GlcNAc...) asparagine" evidence="2">
    <location>
        <position position="440"/>
    </location>
</feature>
<feature type="disulfide bond" evidence="5">
    <location>
        <begin position="49"/>
        <end position="98"/>
    </location>
</feature>
<feature type="disulfide bond" evidence="5">
    <location>
        <begin position="144"/>
        <end position="197"/>
    </location>
</feature>
<feature type="disulfide bond" evidence="5">
    <location>
        <begin position="246"/>
        <end position="295"/>
    </location>
</feature>
<feature type="disulfide bond" evidence="5">
    <location>
        <begin position="343"/>
        <end position="395"/>
    </location>
</feature>
<feature type="disulfide bond" evidence="5">
    <location>
        <begin position="445"/>
        <end position="496"/>
    </location>
</feature>
<protein>
    <recommendedName>
        <fullName evidence="6">Leukocyte immunoglobulin-like receptor subfamily B member 3A</fullName>
    </recommendedName>
</protein>
<name>LRB3A_RAT</name>
<accession>C0HJX2</accession>
<comment type="function">
    <text evidence="1">May act as receptor for class I MHC antigens. Becomes activated upon coligation with immune receptors, such as FCGR2B and the B-cell receptor. Down-regulates antigen-induced B-cell activation by recruiting phosphatases to its immunoreceptor tyrosine-based inhibitor motifs (ITIM).</text>
</comment>
<comment type="subunit">
    <text evidence="1">Interacts with LYN, PTPN6/SHP-1 and PTPN11/SHP-2.</text>
</comment>
<comment type="subcellular location">
    <subcellularLocation>
        <location evidence="1">Cell membrane</location>
        <topology evidence="2">Single-pass membrane protein</topology>
    </subcellularLocation>
</comment>
<comment type="domain">
    <text evidence="1">Contains 3 copies of a cytoplasmic motif that is referred to as the immunoreceptor tyrosine-based inhibitor motif (ITIM). This motif is involved in modulation of cellular responses. The phosphorylated ITIM motif can bind the SH2 domain of several SH2-containing phosphatases, including PTPN6/SHP-1, resulting in the dephosphorylation of the downstream protein kinases SYK and BTK.</text>
</comment>
<comment type="PTM">
    <text evidence="1">Phosphorylated on tyrosine residues by LYN. Phosphorylation at Tyr-697 and Tyr-727 is important for interaction with PTPN6/SHP-1 and PTPN11/SHP-2.</text>
</comment>
<reference evidence="5" key="1">
    <citation type="journal article" date="2004" name="Nature">
        <title>Genome sequence of the Brown Norway rat yields insights into mammalian evolution.</title>
        <authorList>
            <person name="Gibbs R.A."/>
            <person name="Weinstock G.M."/>
            <person name="Metzker M.L."/>
            <person name="Muzny D.M."/>
            <person name="Sodergren E.J."/>
            <person name="Scherer S."/>
            <person name="Scott G."/>
            <person name="Steffen D."/>
            <person name="Worley K.C."/>
            <person name="Burch P.E."/>
            <person name="Okwuonu G."/>
            <person name="Hines S."/>
            <person name="Lewis L."/>
            <person name="Deramo C."/>
            <person name="Delgado O."/>
            <person name="Dugan-Rocha S."/>
            <person name="Miner G."/>
            <person name="Morgan M."/>
            <person name="Hawes A."/>
            <person name="Gill R."/>
            <person name="Holt R.A."/>
            <person name="Adams M.D."/>
            <person name="Amanatides P.G."/>
            <person name="Baden-Tillson H."/>
            <person name="Barnstead M."/>
            <person name="Chin S."/>
            <person name="Evans C.A."/>
            <person name="Ferriera S."/>
            <person name="Fosler C."/>
            <person name="Glodek A."/>
            <person name="Gu Z."/>
            <person name="Jennings D."/>
            <person name="Kraft C.L."/>
            <person name="Nguyen T."/>
            <person name="Pfannkoch C.M."/>
            <person name="Sitter C."/>
            <person name="Sutton G.G."/>
            <person name="Venter J.C."/>
            <person name="Woodage T."/>
            <person name="Smith D."/>
            <person name="Lee H.-M."/>
            <person name="Gustafson E."/>
            <person name="Cahill P."/>
            <person name="Kana A."/>
            <person name="Doucette-Stamm L."/>
            <person name="Weinstock K."/>
            <person name="Fechtel K."/>
            <person name="Weiss R.B."/>
            <person name="Dunn D.M."/>
            <person name="Green E.D."/>
            <person name="Blakesley R.W."/>
            <person name="Bouffard G.G."/>
            <person name="De Jong P.J."/>
            <person name="Osoegawa K."/>
            <person name="Zhu B."/>
            <person name="Marra M."/>
            <person name="Schein J."/>
            <person name="Bosdet I."/>
            <person name="Fjell C."/>
            <person name="Jones S."/>
            <person name="Krzywinski M."/>
            <person name="Mathewson C."/>
            <person name="Siddiqui A."/>
            <person name="Wye N."/>
            <person name="McPherson J."/>
            <person name="Zhao S."/>
            <person name="Fraser C.M."/>
            <person name="Shetty J."/>
            <person name="Shatsman S."/>
            <person name="Geer K."/>
            <person name="Chen Y."/>
            <person name="Abramzon S."/>
            <person name="Nierman W.C."/>
            <person name="Havlak P.H."/>
            <person name="Chen R."/>
            <person name="Durbin K.J."/>
            <person name="Egan A."/>
            <person name="Ren Y."/>
            <person name="Song X.-Z."/>
            <person name="Li B."/>
            <person name="Liu Y."/>
            <person name="Qin X."/>
            <person name="Cawley S."/>
            <person name="Cooney A.J."/>
            <person name="D'Souza L.M."/>
            <person name="Martin K."/>
            <person name="Wu J.Q."/>
            <person name="Gonzalez-Garay M.L."/>
            <person name="Jackson A.R."/>
            <person name="Kalafus K.J."/>
            <person name="McLeod M.P."/>
            <person name="Milosavljevic A."/>
            <person name="Virk D."/>
            <person name="Volkov A."/>
            <person name="Wheeler D.A."/>
            <person name="Zhang Z."/>
            <person name="Bailey J.A."/>
            <person name="Eichler E.E."/>
            <person name="Tuzun E."/>
            <person name="Birney E."/>
            <person name="Mongin E."/>
            <person name="Ureta-Vidal A."/>
            <person name="Woodwark C."/>
            <person name="Zdobnov E."/>
            <person name="Bork P."/>
            <person name="Suyama M."/>
            <person name="Torrents D."/>
            <person name="Alexandersson M."/>
            <person name="Trask B.J."/>
            <person name="Young J.M."/>
            <person name="Huang H."/>
            <person name="Wang H."/>
            <person name="Xing H."/>
            <person name="Daniels S."/>
            <person name="Gietzen D."/>
            <person name="Schmidt J."/>
            <person name="Stevens K."/>
            <person name="Vitt U."/>
            <person name="Wingrove J."/>
            <person name="Camara F."/>
            <person name="Mar Alba M."/>
            <person name="Abril J.F."/>
            <person name="Guigo R."/>
            <person name="Smit A."/>
            <person name="Dubchak I."/>
            <person name="Rubin E.M."/>
            <person name="Couronne O."/>
            <person name="Poliakov A."/>
            <person name="Huebner N."/>
            <person name="Ganten D."/>
            <person name="Goesele C."/>
            <person name="Hummel O."/>
            <person name="Kreitler T."/>
            <person name="Lee Y.-A."/>
            <person name="Monti J."/>
            <person name="Schulz H."/>
            <person name="Zimdahl H."/>
            <person name="Himmelbauer H."/>
            <person name="Lehrach H."/>
            <person name="Jacob H.J."/>
            <person name="Bromberg S."/>
            <person name="Gullings-Handley J."/>
            <person name="Jensen-Seaman M.I."/>
            <person name="Kwitek A.E."/>
            <person name="Lazar J."/>
            <person name="Pasko D."/>
            <person name="Tonellato P.J."/>
            <person name="Twigger S."/>
            <person name="Ponting C.P."/>
            <person name="Duarte J.M."/>
            <person name="Rice S."/>
            <person name="Goodstadt L."/>
            <person name="Beatson S.A."/>
            <person name="Emes R.D."/>
            <person name="Winter E.E."/>
            <person name="Webber C."/>
            <person name="Brandt P."/>
            <person name="Nyakatura G."/>
            <person name="Adetobi M."/>
            <person name="Chiaromonte F."/>
            <person name="Elnitski L."/>
            <person name="Eswara P."/>
            <person name="Hardison R.C."/>
            <person name="Hou M."/>
            <person name="Kolbe D."/>
            <person name="Makova K."/>
            <person name="Miller W."/>
            <person name="Nekrutenko A."/>
            <person name="Riemer C."/>
            <person name="Schwartz S."/>
            <person name="Taylor J."/>
            <person name="Yang S."/>
            <person name="Zhang Y."/>
            <person name="Lindpaintner K."/>
            <person name="Andrews T.D."/>
            <person name="Caccamo M."/>
            <person name="Clamp M."/>
            <person name="Clarke L."/>
            <person name="Curwen V."/>
            <person name="Durbin R.M."/>
            <person name="Eyras E."/>
            <person name="Searle S.M."/>
            <person name="Cooper G.M."/>
            <person name="Batzoglou S."/>
            <person name="Brudno M."/>
            <person name="Sidow A."/>
            <person name="Stone E.A."/>
            <person name="Payseur B.A."/>
            <person name="Bourque G."/>
            <person name="Lopez-Otin C."/>
            <person name="Puente X.S."/>
            <person name="Chakrabarti K."/>
            <person name="Chatterji S."/>
            <person name="Dewey C."/>
            <person name="Pachter L."/>
            <person name="Bray N."/>
            <person name="Yap V.B."/>
            <person name="Caspi A."/>
            <person name="Tesler G."/>
            <person name="Pevzner P.A."/>
            <person name="Haussler D."/>
            <person name="Roskin K.M."/>
            <person name="Baertsch R."/>
            <person name="Clawson H."/>
            <person name="Furey T.S."/>
            <person name="Hinrichs A.S."/>
            <person name="Karolchik D."/>
            <person name="Kent W.J."/>
            <person name="Rosenbloom K.R."/>
            <person name="Trumbower H."/>
            <person name="Weirauch M."/>
            <person name="Cooper D.N."/>
            <person name="Stenson P.D."/>
            <person name="Ma B."/>
            <person name="Brent M."/>
            <person name="Arumugam M."/>
            <person name="Shteynberg D."/>
            <person name="Copley R.R."/>
            <person name="Taylor M.S."/>
            <person name="Riethman H."/>
            <person name="Mudunuri U."/>
            <person name="Peterson J."/>
            <person name="Guyer M."/>
            <person name="Felsenfeld A."/>
            <person name="Old S."/>
            <person name="Mockrin S."/>
            <person name="Collins F.S."/>
        </authorList>
    </citation>
    <scope>NUCLEOTIDE SEQUENCE [LARGE SCALE GENOMIC DNA]</scope>
    <source>
        <strain evidence="4">Brown Norway</strain>
    </source>
</reference>
<keyword id="KW-1064">Adaptive immunity</keyword>
<keyword id="KW-1003">Cell membrane</keyword>
<keyword id="KW-1015">Disulfide bond</keyword>
<keyword id="KW-0325">Glycoprotein</keyword>
<keyword id="KW-0391">Immunity</keyword>
<keyword id="KW-0393">Immunoglobulin domain</keyword>
<keyword id="KW-0472">Membrane</keyword>
<keyword id="KW-0597">Phosphoprotein</keyword>
<keyword id="KW-0675">Receptor</keyword>
<keyword id="KW-1185">Reference proteome</keyword>
<keyword id="KW-0677">Repeat</keyword>
<keyword id="KW-0732">Signal</keyword>
<keyword id="KW-0812">Transmembrane</keyword>
<keyword id="KW-1133">Transmembrane helix</keyword>
<proteinExistence type="inferred from homology"/>
<gene>
    <name evidence="6" type="primary">Lilrb3a</name>
</gene>
<dbReference type="EMBL" id="AABR07002001">
    <property type="status" value="NOT_ANNOTATED_CDS"/>
    <property type="molecule type" value="Genomic_DNA"/>
</dbReference>
<dbReference type="RefSeq" id="NP_001300853.1">
    <property type="nucleotide sequence ID" value="NM_001313924.1"/>
</dbReference>
<dbReference type="RefSeq" id="NP_001300877.1">
    <property type="nucleotide sequence ID" value="NM_001313948.1"/>
</dbReference>
<dbReference type="SMR" id="C0HJX2"/>
<dbReference type="FunCoup" id="C0HJX2">
    <property type="interactions" value="26"/>
</dbReference>
<dbReference type="STRING" id="10116.ENSRNOP00000073630"/>
<dbReference type="GlyCosmos" id="C0HJX2">
    <property type="glycosylation" value="3 sites, No reported glycans"/>
</dbReference>
<dbReference type="GlyGen" id="C0HJX2">
    <property type="glycosylation" value="3 sites"/>
</dbReference>
<dbReference type="Ensembl" id="ENSRNOT00000077327.2">
    <property type="protein sequence ID" value="ENSRNOP00000071172.2"/>
    <property type="gene ID" value="ENSRNOG00000058422.2"/>
</dbReference>
<dbReference type="GeneID" id="683463"/>
<dbReference type="KEGG" id="rno:683463"/>
<dbReference type="AGR" id="RGD:1589827"/>
<dbReference type="CTD" id="18733"/>
<dbReference type="RGD" id="1586827">
    <property type="gene designation" value="Lilrb3a"/>
</dbReference>
<dbReference type="InParanoid" id="C0HJX2"/>
<dbReference type="OrthoDB" id="9427497at2759"/>
<dbReference type="PRO" id="PR:C0HJX2"/>
<dbReference type="Proteomes" id="UP000002494">
    <property type="component" value="Chromosome 1"/>
</dbReference>
<dbReference type="GO" id="GO:0005886">
    <property type="term" value="C:plasma membrane"/>
    <property type="evidence" value="ECO:0000318"/>
    <property type="project" value="GO_Central"/>
</dbReference>
<dbReference type="GO" id="GO:0032396">
    <property type="term" value="F:inhibitory MHC class I receptor activity"/>
    <property type="evidence" value="ECO:0000318"/>
    <property type="project" value="GO_Central"/>
</dbReference>
<dbReference type="GO" id="GO:0002250">
    <property type="term" value="P:adaptive immune response"/>
    <property type="evidence" value="ECO:0007669"/>
    <property type="project" value="UniProtKB-KW"/>
</dbReference>
<dbReference type="GO" id="GO:0019221">
    <property type="term" value="P:cytokine-mediated signaling pathway"/>
    <property type="evidence" value="ECO:0000318"/>
    <property type="project" value="GO_Central"/>
</dbReference>
<dbReference type="GO" id="GO:0002764">
    <property type="term" value="P:immune response-regulating signaling pathway"/>
    <property type="evidence" value="ECO:0000318"/>
    <property type="project" value="GO_Central"/>
</dbReference>
<dbReference type="CDD" id="cd16843">
    <property type="entry name" value="IgC2_D1_D2_LILR_KIR_like"/>
    <property type="match status" value="1"/>
</dbReference>
<dbReference type="FunFam" id="2.60.40.10:FF:000049">
    <property type="entry name" value="Leukocyte immunoglobulin-like receptor subfamily B member 1"/>
    <property type="match status" value="5"/>
</dbReference>
<dbReference type="Gene3D" id="2.60.40.10">
    <property type="entry name" value="Immunoglobulins"/>
    <property type="match status" value="5"/>
</dbReference>
<dbReference type="InterPro" id="IPR007110">
    <property type="entry name" value="Ig-like_dom"/>
</dbReference>
<dbReference type="InterPro" id="IPR036179">
    <property type="entry name" value="Ig-like_dom_sf"/>
</dbReference>
<dbReference type="InterPro" id="IPR013783">
    <property type="entry name" value="Ig-like_fold"/>
</dbReference>
<dbReference type="InterPro" id="IPR050412">
    <property type="entry name" value="Ig-like_Receptors_ImmuneReg"/>
</dbReference>
<dbReference type="InterPro" id="IPR003599">
    <property type="entry name" value="Ig_sub"/>
</dbReference>
<dbReference type="InterPro" id="IPR003598">
    <property type="entry name" value="Ig_sub2"/>
</dbReference>
<dbReference type="InterPro" id="IPR013151">
    <property type="entry name" value="Immunoglobulin_dom"/>
</dbReference>
<dbReference type="PANTHER" id="PTHR11738:SF179">
    <property type="entry name" value="LEUKOCYTE IMMUNOGLOBULIN-LIKE RECEPTOR SUBFAMILY A MEMBER 5"/>
    <property type="match status" value="1"/>
</dbReference>
<dbReference type="PANTHER" id="PTHR11738">
    <property type="entry name" value="MHC CLASS I NK CELL RECEPTOR"/>
    <property type="match status" value="1"/>
</dbReference>
<dbReference type="Pfam" id="PF00047">
    <property type="entry name" value="ig"/>
    <property type="match status" value="2"/>
</dbReference>
<dbReference type="Pfam" id="PF13895">
    <property type="entry name" value="Ig_2"/>
    <property type="match status" value="2"/>
</dbReference>
<dbReference type="SMART" id="SM00409">
    <property type="entry name" value="IG"/>
    <property type="match status" value="4"/>
</dbReference>
<dbReference type="SMART" id="SM00408">
    <property type="entry name" value="IGc2"/>
    <property type="match status" value="3"/>
</dbReference>
<dbReference type="SUPFAM" id="SSF48726">
    <property type="entry name" value="Immunoglobulin"/>
    <property type="match status" value="5"/>
</dbReference>
<dbReference type="PROSITE" id="PS50835">
    <property type="entry name" value="IG_LIKE"/>
    <property type="match status" value="1"/>
</dbReference>
<organism evidence="4">
    <name type="scientific">Rattus norvegicus</name>
    <name type="common">Rat</name>
    <dbReference type="NCBI Taxonomy" id="10116"/>
    <lineage>
        <taxon>Eukaryota</taxon>
        <taxon>Metazoa</taxon>
        <taxon>Chordata</taxon>
        <taxon>Craniata</taxon>
        <taxon>Vertebrata</taxon>
        <taxon>Euteleostomi</taxon>
        <taxon>Mammalia</taxon>
        <taxon>Eutheria</taxon>
        <taxon>Euarchontoglires</taxon>
        <taxon>Glires</taxon>
        <taxon>Rodentia</taxon>
        <taxon>Myomorpha</taxon>
        <taxon>Muroidea</taxon>
        <taxon>Muridae</taxon>
        <taxon>Murinae</taxon>
        <taxon>Rattus</taxon>
    </lineage>
</organism>
<evidence type="ECO:0000250" key="1">
    <source>
        <dbReference type="UniProtKB" id="P97484"/>
    </source>
</evidence>
<evidence type="ECO:0000255" key="2"/>
<evidence type="ECO:0000256" key="3">
    <source>
        <dbReference type="SAM" id="MobiDB-lite"/>
    </source>
</evidence>
<evidence type="ECO:0000303" key="4">
    <source>
    </source>
</evidence>
<evidence type="ECO:0000305" key="5"/>
<evidence type="ECO:0000312" key="6">
    <source>
        <dbReference type="RGD" id="1586827"/>
    </source>
</evidence>
<sequence>MTFTFTALLCLGLTLGLWIPVLTGSLPKPILRVQPDSVVSMGTTVTFICEETIGAKQSYLYRNGNLQRRVPKNNQKPTNKTEFLFLNVGHQNAGQYHCSYKSQGKSSDYSEPLELVVTGAYSKPSLSAQTNPVVTSGGYVTLKCEPSHYGHTLILTVEGPQKLSWRQDPQCNYYTENCHVLFYVGPLTSNQRWIFRCYSYETNTPQVWSAPSEPVEILVSGKLQKPTIKAEPGSVIHSGKAMIIWCQGDLDAEIYFLHKEGSHNTQSTQTLQQPGNKAKLFIRPVTQGHAGDYRCYYYSSAGWSEPSDTLELVVTGIYNYHPLMLSGPPSPVVPEGGNVTLHCTSHRYYDKFILIKEDQKFSSSLDTKYISSTGQHQALFVMGPMTPNYSGTFRCYGYYKHTPQLWSEPSNLLKILITGQLHHVLFLSVMPNSTVHSGENVTLMCWSTYSVDTFILSKEGSGQPPLRLKSKIQDQQYQSEFSMSGVTSKLSGTYRCYGSHDSSLYLLSFASAPVELIVSGPIRTSDLPPTMSIPPDGLQRYLKALIGVSVAFLLFLFILIFILLRRRHQEKFRKDDEDAQKGKELQLSTGAAEPVTRDRGHQKRSNPAAATQEESLYASVEDMETKDGVELDTWKPPEGDPQGETYAQVEPSRLRRAGAISPVVSREQLNTKYEQAEEGQEVDSQATESEEPQDVTYAQLCSRTLRQGTAAPPLSQAGEAPEEPSVYAALATARPGAVPKNKKQ</sequence>